<keyword id="KW-0067">ATP-binding</keyword>
<keyword id="KW-0997">Cell inner membrane</keyword>
<keyword id="KW-1003">Cell membrane</keyword>
<keyword id="KW-0472">Membrane</keyword>
<keyword id="KW-0547">Nucleotide-binding</keyword>
<keyword id="KW-0592">Phosphate transport</keyword>
<keyword id="KW-1185">Reference proteome</keyword>
<keyword id="KW-1278">Translocase</keyword>
<keyword id="KW-0813">Transport</keyword>
<reference key="1">
    <citation type="journal article" date="2006" name="Proc. Natl. Acad. Sci. U.S.A.">
        <title>Genome sequence of Synechococcus CC9311: insights into adaptation to a coastal environment.</title>
        <authorList>
            <person name="Palenik B."/>
            <person name="Ren Q."/>
            <person name="Dupont C.L."/>
            <person name="Myers G.S."/>
            <person name="Heidelberg J.F."/>
            <person name="Badger J.H."/>
            <person name="Madupu R."/>
            <person name="Nelson W.C."/>
            <person name="Brinkac L.M."/>
            <person name="Dodson R.J."/>
            <person name="Durkin A.S."/>
            <person name="Daugherty S.C."/>
            <person name="Sullivan S.A."/>
            <person name="Khouri H."/>
            <person name="Mohamoud Y."/>
            <person name="Halpin R."/>
            <person name="Paulsen I.T."/>
        </authorList>
    </citation>
    <scope>NUCLEOTIDE SEQUENCE [LARGE SCALE GENOMIC DNA]</scope>
    <source>
        <strain>CC9311</strain>
    </source>
</reference>
<protein>
    <recommendedName>
        <fullName evidence="1">Phosphate import ATP-binding protein PstB</fullName>
        <ecNumber evidence="1">7.3.2.1</ecNumber>
    </recommendedName>
    <alternativeName>
        <fullName evidence="1">ABC phosphate transporter</fullName>
    </alternativeName>
    <alternativeName>
        <fullName evidence="1">Phosphate-transporting ATPase</fullName>
    </alternativeName>
</protein>
<organism>
    <name type="scientific">Synechococcus sp. (strain CC9311)</name>
    <dbReference type="NCBI Taxonomy" id="64471"/>
    <lineage>
        <taxon>Bacteria</taxon>
        <taxon>Bacillati</taxon>
        <taxon>Cyanobacteriota</taxon>
        <taxon>Cyanophyceae</taxon>
        <taxon>Synechococcales</taxon>
        <taxon>Synechococcaceae</taxon>
        <taxon>Synechococcus</taxon>
    </lineage>
</organism>
<accession>Q0IAC3</accession>
<proteinExistence type="inferred from homology"/>
<name>PSTB_SYNS3</name>
<sequence length="272" mass="29892">MTATSSSESPDPNVDVCVSIQNATISYGDFEAVKNVYCDIPRGQVTAFIGPSGCGKSTILRALNRMNDLIEGCSLKGRILFDGADLYAPEVDPVEVRRRIGMVFQQPNPFPKSIYENIAFGARINGYNGDMDELVERSLRQAAIWDECKDKLNESGNSLSGGQQQRLCIARTIAIEPEVILMDEPCSALDPISTLKIEETIHELKKSFTIVIVTHNMQQAVRVSDMTAFFNAEAVDGESGKVGYLVEFNDTDKIFNAPSQQATQDYVSGRFG</sequence>
<evidence type="ECO:0000255" key="1">
    <source>
        <dbReference type="HAMAP-Rule" id="MF_01702"/>
    </source>
</evidence>
<dbReference type="EC" id="7.3.2.1" evidence="1"/>
<dbReference type="EMBL" id="CP000435">
    <property type="protein sequence ID" value="ABI46261.1"/>
    <property type="molecule type" value="Genomic_DNA"/>
</dbReference>
<dbReference type="RefSeq" id="WP_011619317.1">
    <property type="nucleotide sequence ID" value="NC_008319.1"/>
</dbReference>
<dbReference type="SMR" id="Q0IAC3"/>
<dbReference type="STRING" id="64471.sync_1392"/>
<dbReference type="KEGG" id="syg:sync_1392"/>
<dbReference type="eggNOG" id="COG1117">
    <property type="taxonomic scope" value="Bacteria"/>
</dbReference>
<dbReference type="HOGENOM" id="CLU_000604_1_22_3"/>
<dbReference type="OrthoDB" id="9802185at2"/>
<dbReference type="Proteomes" id="UP000001961">
    <property type="component" value="Chromosome"/>
</dbReference>
<dbReference type="GO" id="GO:0005886">
    <property type="term" value="C:plasma membrane"/>
    <property type="evidence" value="ECO:0007669"/>
    <property type="project" value="UniProtKB-SubCell"/>
</dbReference>
<dbReference type="GO" id="GO:0005524">
    <property type="term" value="F:ATP binding"/>
    <property type="evidence" value="ECO:0007669"/>
    <property type="project" value="UniProtKB-KW"/>
</dbReference>
<dbReference type="GO" id="GO:0016887">
    <property type="term" value="F:ATP hydrolysis activity"/>
    <property type="evidence" value="ECO:0007669"/>
    <property type="project" value="InterPro"/>
</dbReference>
<dbReference type="GO" id="GO:0015415">
    <property type="term" value="F:ATPase-coupled phosphate ion transmembrane transporter activity"/>
    <property type="evidence" value="ECO:0007669"/>
    <property type="project" value="UniProtKB-EC"/>
</dbReference>
<dbReference type="GO" id="GO:0035435">
    <property type="term" value="P:phosphate ion transmembrane transport"/>
    <property type="evidence" value="ECO:0007669"/>
    <property type="project" value="InterPro"/>
</dbReference>
<dbReference type="CDD" id="cd03260">
    <property type="entry name" value="ABC_PstB_phosphate_transporter"/>
    <property type="match status" value="1"/>
</dbReference>
<dbReference type="Gene3D" id="3.40.50.300">
    <property type="entry name" value="P-loop containing nucleotide triphosphate hydrolases"/>
    <property type="match status" value="1"/>
</dbReference>
<dbReference type="InterPro" id="IPR003593">
    <property type="entry name" value="AAA+_ATPase"/>
</dbReference>
<dbReference type="InterPro" id="IPR003439">
    <property type="entry name" value="ABC_transporter-like_ATP-bd"/>
</dbReference>
<dbReference type="InterPro" id="IPR017871">
    <property type="entry name" value="ABC_transporter-like_CS"/>
</dbReference>
<dbReference type="InterPro" id="IPR027417">
    <property type="entry name" value="P-loop_NTPase"/>
</dbReference>
<dbReference type="InterPro" id="IPR005670">
    <property type="entry name" value="PstB-like"/>
</dbReference>
<dbReference type="NCBIfam" id="TIGR00972">
    <property type="entry name" value="3a0107s01c2"/>
    <property type="match status" value="1"/>
</dbReference>
<dbReference type="PANTHER" id="PTHR43423">
    <property type="entry name" value="ABC TRANSPORTER I FAMILY MEMBER 17"/>
    <property type="match status" value="1"/>
</dbReference>
<dbReference type="PANTHER" id="PTHR43423:SF1">
    <property type="entry name" value="ABC TRANSPORTER I FAMILY MEMBER 17"/>
    <property type="match status" value="1"/>
</dbReference>
<dbReference type="Pfam" id="PF00005">
    <property type="entry name" value="ABC_tran"/>
    <property type="match status" value="1"/>
</dbReference>
<dbReference type="SMART" id="SM00382">
    <property type="entry name" value="AAA"/>
    <property type="match status" value="1"/>
</dbReference>
<dbReference type="SUPFAM" id="SSF52540">
    <property type="entry name" value="P-loop containing nucleoside triphosphate hydrolases"/>
    <property type="match status" value="1"/>
</dbReference>
<dbReference type="PROSITE" id="PS00211">
    <property type="entry name" value="ABC_TRANSPORTER_1"/>
    <property type="match status" value="1"/>
</dbReference>
<dbReference type="PROSITE" id="PS50893">
    <property type="entry name" value="ABC_TRANSPORTER_2"/>
    <property type="match status" value="1"/>
</dbReference>
<dbReference type="PROSITE" id="PS51238">
    <property type="entry name" value="PSTB"/>
    <property type="match status" value="1"/>
</dbReference>
<gene>
    <name evidence="1" type="primary">pstB</name>
    <name type="ordered locus">sync_1392</name>
</gene>
<feature type="chain" id="PRO_0000272556" description="Phosphate import ATP-binding protein PstB">
    <location>
        <begin position="1"/>
        <end position="272"/>
    </location>
</feature>
<feature type="domain" description="ABC transporter" evidence="1">
    <location>
        <begin position="18"/>
        <end position="257"/>
    </location>
</feature>
<feature type="binding site" evidence="1">
    <location>
        <begin position="50"/>
        <end position="57"/>
    </location>
    <ligand>
        <name>ATP</name>
        <dbReference type="ChEBI" id="CHEBI:30616"/>
    </ligand>
</feature>
<comment type="function">
    <text evidence="1">Part of the ABC transporter complex PstSACB involved in phosphate import. Responsible for energy coupling to the transport system.</text>
</comment>
<comment type="catalytic activity">
    <reaction evidence="1">
        <text>phosphate(out) + ATP + H2O = ADP + 2 phosphate(in) + H(+)</text>
        <dbReference type="Rhea" id="RHEA:24440"/>
        <dbReference type="ChEBI" id="CHEBI:15377"/>
        <dbReference type="ChEBI" id="CHEBI:15378"/>
        <dbReference type="ChEBI" id="CHEBI:30616"/>
        <dbReference type="ChEBI" id="CHEBI:43474"/>
        <dbReference type="ChEBI" id="CHEBI:456216"/>
        <dbReference type="EC" id="7.3.2.1"/>
    </reaction>
</comment>
<comment type="subunit">
    <text evidence="1">The complex is composed of two ATP-binding proteins (PstB), two transmembrane proteins (PstC and PstA) and a solute-binding protein (PstS).</text>
</comment>
<comment type="subcellular location">
    <subcellularLocation>
        <location evidence="1">Cell inner membrane</location>
        <topology evidence="1">Peripheral membrane protein</topology>
    </subcellularLocation>
</comment>
<comment type="similarity">
    <text evidence="1">Belongs to the ABC transporter superfamily. Phosphate importer (TC 3.A.1.7) family.</text>
</comment>